<organismHost>
    <name type="scientific">Amazona oratrix</name>
    <name type="common">yellow-headed parrot</name>
    <dbReference type="NCBI Taxonomy" id="152276"/>
</organismHost>
<sequence length="366" mass="39900">MSSAMGAVRPRRRQRRGIATTQLAAGRERRDEDDDAVKLRGEMVYVSSGTIAYSAWMFETIFGAGGSGAYSVAERPVMLTRVGEGLESCSCSYMGLTLYPVKTEQAGRMKRLAYRETLEPCVDCDAPGEQMAGGAVADEAYEDEDGADVCTIGVLENGTEAWPYHEVFFFPIVPTLDRWWPCVPSPALFLAIAKLATARLVARRRENGEPNGTTPSVHPLFYSTRVEAPPGSKELFLSTRELLGPLYDPLFDATEEDAGLLGIGTVVNANDFQAGVGLAFRPYDERSREEKQAVAAELRTLICGILDEDIGPGPCYVIVDRGPVRRRTSFYAAAGFKYTSVFEPAGSGKTKCHSVRLLNSALKPLL</sequence>
<proteinExistence type="predicted"/>
<name>ORFD_PSHV1</name>
<organism>
    <name type="scientific">Psittacid herpesvirus 1 (isolate Amazon parrot/-/97-0001/1997)</name>
    <name type="common">PsHV-1</name>
    <name type="synonym">Pacheco's disease virus</name>
    <dbReference type="NCBI Taxonomy" id="670426"/>
    <lineage>
        <taxon>Viruses</taxon>
        <taxon>Duplodnaviria</taxon>
        <taxon>Heunggongvirae</taxon>
        <taxon>Peploviricota</taxon>
        <taxon>Herviviricetes</taxon>
        <taxon>Herpesvirales</taxon>
        <taxon>Orthoherpesviridae</taxon>
        <taxon>Alphaherpesvirinae</taxon>
        <taxon>Iltovirus</taxon>
        <taxon>Iltovirus psittacidalpha1</taxon>
        <taxon>Psittacid alphaherpesvirus 1</taxon>
    </lineage>
</organism>
<protein>
    <recommendedName>
        <fullName>Uncharacterized protein ORFD</fullName>
    </recommendedName>
</protein>
<feature type="chain" id="PRO_0000406838" description="Uncharacterized protein ORFD">
    <location>
        <begin position="1"/>
        <end position="366"/>
    </location>
</feature>
<reference key="1">
    <citation type="journal article" date="2006" name="J. Virol.">
        <title>Psittacid herpesvirus 1 and infectious laryngotracheitis virus: Comparative genome sequence analysis of two avian alphaherpesviruses.</title>
        <authorList>
            <person name="Thureen D.R."/>
            <person name="Keeler C.L. Jr."/>
        </authorList>
    </citation>
    <scope>NUCLEOTIDE SEQUENCE [LARGE SCALE GENOMIC DNA]</scope>
</reference>
<gene>
    <name type="primary">ORFD</name>
</gene>
<dbReference type="EMBL" id="AY372243">
    <property type="protein sequence ID" value="AAQ73698.1"/>
    <property type="molecule type" value="Genomic_DNA"/>
</dbReference>
<dbReference type="RefSeq" id="NP_944392.1">
    <property type="nucleotide sequence ID" value="NC_005264.1"/>
</dbReference>
<dbReference type="GeneID" id="4237762"/>
<dbReference type="KEGG" id="vg:4237762"/>
<dbReference type="Proteomes" id="UP000006840">
    <property type="component" value="Segment"/>
</dbReference>
<accession>Q6UDL2</accession>
<keyword id="KW-1185">Reference proteome</keyword>